<reference key="1">
    <citation type="journal article" date="2001" name="Science">
        <title>Comparative genomics of Listeria species.</title>
        <authorList>
            <person name="Glaser P."/>
            <person name="Frangeul L."/>
            <person name="Buchrieser C."/>
            <person name="Rusniok C."/>
            <person name="Amend A."/>
            <person name="Baquero F."/>
            <person name="Berche P."/>
            <person name="Bloecker H."/>
            <person name="Brandt P."/>
            <person name="Chakraborty T."/>
            <person name="Charbit A."/>
            <person name="Chetouani F."/>
            <person name="Couve E."/>
            <person name="de Daruvar A."/>
            <person name="Dehoux P."/>
            <person name="Domann E."/>
            <person name="Dominguez-Bernal G."/>
            <person name="Duchaud E."/>
            <person name="Durant L."/>
            <person name="Dussurget O."/>
            <person name="Entian K.-D."/>
            <person name="Fsihi H."/>
            <person name="Garcia-del Portillo F."/>
            <person name="Garrido P."/>
            <person name="Gautier L."/>
            <person name="Goebel W."/>
            <person name="Gomez-Lopez N."/>
            <person name="Hain T."/>
            <person name="Hauf J."/>
            <person name="Jackson D."/>
            <person name="Jones L.-M."/>
            <person name="Kaerst U."/>
            <person name="Kreft J."/>
            <person name="Kuhn M."/>
            <person name="Kunst F."/>
            <person name="Kurapkat G."/>
            <person name="Madueno E."/>
            <person name="Maitournam A."/>
            <person name="Mata Vicente J."/>
            <person name="Ng E."/>
            <person name="Nedjari H."/>
            <person name="Nordsiek G."/>
            <person name="Novella S."/>
            <person name="de Pablos B."/>
            <person name="Perez-Diaz J.-C."/>
            <person name="Purcell R."/>
            <person name="Remmel B."/>
            <person name="Rose M."/>
            <person name="Schlueter T."/>
            <person name="Simoes N."/>
            <person name="Tierrez A."/>
            <person name="Vazquez-Boland J.-A."/>
            <person name="Voss H."/>
            <person name="Wehland J."/>
            <person name="Cossart P."/>
        </authorList>
    </citation>
    <scope>NUCLEOTIDE SEQUENCE [LARGE SCALE GENOMIC DNA]</scope>
    <source>
        <strain>ATCC BAA-679 / EGD-e</strain>
    </source>
</reference>
<organism>
    <name type="scientific">Listeria monocytogenes serovar 1/2a (strain ATCC BAA-679 / EGD-e)</name>
    <dbReference type="NCBI Taxonomy" id="169963"/>
    <lineage>
        <taxon>Bacteria</taxon>
        <taxon>Bacillati</taxon>
        <taxon>Bacillota</taxon>
        <taxon>Bacilli</taxon>
        <taxon>Bacillales</taxon>
        <taxon>Listeriaceae</taxon>
        <taxon>Listeria</taxon>
    </lineage>
</organism>
<sequence length="456" mass="50837">MEKLWGGRFQGKSEAWIDDFGASISFDQKMAKEDLAGSLAHVAMLGKCGIIPASEAAEITAGLKILQEKLAFGELEFSTVNEDIHLNIEKLLHEEIGSVAGKLHTARSRNDQVATDMHLYLKQAVAEIIQSLKHLRVVLVQKAELHVETIMPGYTHLQHAQPLSFAHHLLAYFGMFTRDLERLEESVKRIDISPLGSAALAGTTFPIDRAYSAELLGFSAVYENSLDGVSDRDFIIEFLSNSSILMMHLSRFCEELILWTSHEFQFVELTDAFSTGSSIMPQKKNPDMAELIRGKTGRVYGNLFGMLTVLKGLPLAYNKDLQEDKEGMFDTLETVQTSLDIFAGMIETMKVNTEIMEESTQKDFSNATELADYLAKKGVPFREAHEIVGKLVLECTQNGIYLQDVALSHYQEINPLIEEDIYVVLSSKTAVQKRNSYGGTGFDQIKVALENAKKTL</sequence>
<protein>
    <recommendedName>
        <fullName evidence="1">Argininosuccinate lyase</fullName>
        <shortName evidence="1">ASAL</shortName>
        <ecNumber evidence="1">4.3.2.1</ecNumber>
    </recommendedName>
    <alternativeName>
        <fullName evidence="1">Arginosuccinase</fullName>
    </alternativeName>
</protein>
<gene>
    <name evidence="1" type="primary">argH</name>
    <name type="ordered locus">lmo2091</name>
</gene>
<feature type="chain" id="PRO_0000137787" description="Argininosuccinate lyase">
    <location>
        <begin position="1"/>
        <end position="456"/>
    </location>
</feature>
<evidence type="ECO:0000255" key="1">
    <source>
        <dbReference type="HAMAP-Rule" id="MF_00006"/>
    </source>
</evidence>
<comment type="catalytic activity">
    <reaction evidence="1">
        <text>2-(N(omega)-L-arginino)succinate = fumarate + L-arginine</text>
        <dbReference type="Rhea" id="RHEA:24020"/>
        <dbReference type="ChEBI" id="CHEBI:29806"/>
        <dbReference type="ChEBI" id="CHEBI:32682"/>
        <dbReference type="ChEBI" id="CHEBI:57472"/>
        <dbReference type="EC" id="4.3.2.1"/>
    </reaction>
</comment>
<comment type="pathway">
    <text evidence="1">Amino-acid biosynthesis; L-arginine biosynthesis; L-arginine from L-ornithine and carbamoyl phosphate: step 3/3.</text>
</comment>
<comment type="subcellular location">
    <subcellularLocation>
        <location evidence="1">Cytoplasm</location>
    </subcellularLocation>
</comment>
<comment type="similarity">
    <text evidence="1">Belongs to the lyase 1 family. Argininosuccinate lyase subfamily.</text>
</comment>
<keyword id="KW-0028">Amino-acid biosynthesis</keyword>
<keyword id="KW-0055">Arginine biosynthesis</keyword>
<keyword id="KW-0963">Cytoplasm</keyword>
<keyword id="KW-0456">Lyase</keyword>
<keyword id="KW-1185">Reference proteome</keyword>
<proteinExistence type="inferred from homology"/>
<dbReference type="EC" id="4.3.2.1" evidence="1"/>
<dbReference type="EMBL" id="AL591982">
    <property type="protein sequence ID" value="CAD00169.1"/>
    <property type="molecule type" value="Genomic_DNA"/>
</dbReference>
<dbReference type="PIR" id="AC1336">
    <property type="entry name" value="AC1336"/>
</dbReference>
<dbReference type="RefSeq" id="NP_465615.1">
    <property type="nucleotide sequence ID" value="NC_003210.1"/>
</dbReference>
<dbReference type="RefSeq" id="WP_010989893.1">
    <property type="nucleotide sequence ID" value="NZ_CP149495.1"/>
</dbReference>
<dbReference type="SMR" id="Q8Y5H1"/>
<dbReference type="STRING" id="169963.gene:17594777"/>
<dbReference type="PaxDb" id="169963-lmo2091"/>
<dbReference type="EnsemblBacteria" id="CAD00169">
    <property type="protein sequence ID" value="CAD00169"/>
    <property type="gene ID" value="CAD00169"/>
</dbReference>
<dbReference type="GeneID" id="987914"/>
<dbReference type="KEGG" id="lmo:lmo2091"/>
<dbReference type="PATRIC" id="fig|169963.11.peg.2141"/>
<dbReference type="eggNOG" id="COG0165">
    <property type="taxonomic scope" value="Bacteria"/>
</dbReference>
<dbReference type="HOGENOM" id="CLU_027272_2_3_9"/>
<dbReference type="OrthoDB" id="9769623at2"/>
<dbReference type="PhylomeDB" id="Q8Y5H1"/>
<dbReference type="BioCyc" id="LMON169963:LMO2091-MONOMER"/>
<dbReference type="UniPathway" id="UPA00068">
    <property type="reaction ID" value="UER00114"/>
</dbReference>
<dbReference type="Proteomes" id="UP000000817">
    <property type="component" value="Chromosome"/>
</dbReference>
<dbReference type="GO" id="GO:0005829">
    <property type="term" value="C:cytosol"/>
    <property type="evidence" value="ECO:0000318"/>
    <property type="project" value="GO_Central"/>
</dbReference>
<dbReference type="GO" id="GO:0004056">
    <property type="term" value="F:argininosuccinate lyase activity"/>
    <property type="evidence" value="ECO:0000318"/>
    <property type="project" value="GO_Central"/>
</dbReference>
<dbReference type="GO" id="GO:0042450">
    <property type="term" value="P:arginine biosynthetic process via ornithine"/>
    <property type="evidence" value="ECO:0000318"/>
    <property type="project" value="GO_Central"/>
</dbReference>
<dbReference type="GO" id="GO:0006526">
    <property type="term" value="P:L-arginine biosynthetic process"/>
    <property type="evidence" value="ECO:0007669"/>
    <property type="project" value="UniProtKB-UniRule"/>
</dbReference>
<dbReference type="CDD" id="cd01359">
    <property type="entry name" value="Argininosuccinate_lyase"/>
    <property type="match status" value="1"/>
</dbReference>
<dbReference type="FunFam" id="1.10.275.10:FF:000002">
    <property type="entry name" value="Argininosuccinate lyase"/>
    <property type="match status" value="1"/>
</dbReference>
<dbReference type="FunFam" id="1.10.40.30:FF:000001">
    <property type="entry name" value="Argininosuccinate lyase"/>
    <property type="match status" value="1"/>
</dbReference>
<dbReference type="FunFam" id="1.20.200.10:FF:000006">
    <property type="entry name" value="Argininosuccinate lyase"/>
    <property type="match status" value="1"/>
</dbReference>
<dbReference type="Gene3D" id="1.10.40.30">
    <property type="entry name" value="Fumarase/aspartase (C-terminal domain)"/>
    <property type="match status" value="1"/>
</dbReference>
<dbReference type="Gene3D" id="1.20.200.10">
    <property type="entry name" value="Fumarase/aspartase (Central domain)"/>
    <property type="match status" value="1"/>
</dbReference>
<dbReference type="Gene3D" id="1.10.275.10">
    <property type="entry name" value="Fumarase/aspartase (N-terminal domain)"/>
    <property type="match status" value="1"/>
</dbReference>
<dbReference type="HAMAP" id="MF_00006">
    <property type="entry name" value="Arg_succ_lyase"/>
    <property type="match status" value="1"/>
</dbReference>
<dbReference type="InterPro" id="IPR029419">
    <property type="entry name" value="Arg_succ_lyase_C"/>
</dbReference>
<dbReference type="InterPro" id="IPR009049">
    <property type="entry name" value="Argininosuccinate_lyase"/>
</dbReference>
<dbReference type="InterPro" id="IPR024083">
    <property type="entry name" value="Fumarase/histidase_N"/>
</dbReference>
<dbReference type="InterPro" id="IPR020557">
    <property type="entry name" value="Fumarate_lyase_CS"/>
</dbReference>
<dbReference type="InterPro" id="IPR000362">
    <property type="entry name" value="Fumarate_lyase_fam"/>
</dbReference>
<dbReference type="InterPro" id="IPR022761">
    <property type="entry name" value="Fumarate_lyase_N"/>
</dbReference>
<dbReference type="InterPro" id="IPR008948">
    <property type="entry name" value="L-Aspartase-like"/>
</dbReference>
<dbReference type="NCBIfam" id="TIGR00838">
    <property type="entry name" value="argH"/>
    <property type="match status" value="1"/>
</dbReference>
<dbReference type="PANTHER" id="PTHR43814">
    <property type="entry name" value="ARGININOSUCCINATE LYASE"/>
    <property type="match status" value="1"/>
</dbReference>
<dbReference type="PANTHER" id="PTHR43814:SF1">
    <property type="entry name" value="ARGININOSUCCINATE LYASE"/>
    <property type="match status" value="1"/>
</dbReference>
<dbReference type="Pfam" id="PF14698">
    <property type="entry name" value="ASL_C2"/>
    <property type="match status" value="1"/>
</dbReference>
<dbReference type="Pfam" id="PF00206">
    <property type="entry name" value="Lyase_1"/>
    <property type="match status" value="1"/>
</dbReference>
<dbReference type="PRINTS" id="PR00145">
    <property type="entry name" value="ARGSUCLYASE"/>
</dbReference>
<dbReference type="PRINTS" id="PR00149">
    <property type="entry name" value="FUMRATELYASE"/>
</dbReference>
<dbReference type="SUPFAM" id="SSF48557">
    <property type="entry name" value="L-aspartase-like"/>
    <property type="match status" value="1"/>
</dbReference>
<dbReference type="PROSITE" id="PS00163">
    <property type="entry name" value="FUMARATE_LYASES"/>
    <property type="match status" value="1"/>
</dbReference>
<name>ARLY_LISMO</name>
<accession>Q8Y5H1</accession>